<accession>B4M401</accession>
<sequence>MDQYLIKMSTKSKNNDKTEQNIPIKENTTRQTKDAKEKIATANKRKNKDTPEIIKDKENADTENPPKRRSARLTRSTRSMAEDGTPSPEKEIPEKLPFIKYRGAIKYYTESHEIAASADEVMQWVEKQTNADVVPLAFDMEWPFSFQTGPGKSSVIQICVEERCCYVYQLSKLKRIPAALVALLNHSKVRLHGVNIKADFRKLERDFPEVAAEPLIEKCIDLGVWCNEVCETGGRWSLERLANFIAKKAMDKSKKVRMSKWHVIPLDENQLMYAAIDVYIGQVIYRDIEQREKTKLKNEAEFKDQNGDAAFKAVKALGETFLAKINEVTL</sequence>
<organism>
    <name type="scientific">Drosophila virilis</name>
    <name type="common">Fruit fly</name>
    <dbReference type="NCBI Taxonomy" id="7244"/>
    <lineage>
        <taxon>Eukaryota</taxon>
        <taxon>Metazoa</taxon>
        <taxon>Ecdysozoa</taxon>
        <taxon>Arthropoda</taxon>
        <taxon>Hexapoda</taxon>
        <taxon>Insecta</taxon>
        <taxon>Pterygota</taxon>
        <taxon>Neoptera</taxon>
        <taxon>Endopterygota</taxon>
        <taxon>Diptera</taxon>
        <taxon>Brachycera</taxon>
        <taxon>Muscomorpha</taxon>
        <taxon>Ephydroidea</taxon>
        <taxon>Drosophilidae</taxon>
        <taxon>Drosophila</taxon>
    </lineage>
</organism>
<gene>
    <name evidence="2" type="primary">WRNexo</name>
    <name type="ORF">GJ10837</name>
</gene>
<evidence type="ECO:0000250" key="1">
    <source>
        <dbReference type="UniProtKB" id="Q14191"/>
    </source>
</evidence>
<evidence type="ECO:0000250" key="2">
    <source>
        <dbReference type="UniProtKB" id="Q9VE86"/>
    </source>
</evidence>
<evidence type="ECO:0000255" key="3"/>
<evidence type="ECO:0000256" key="4">
    <source>
        <dbReference type="SAM" id="MobiDB-lite"/>
    </source>
</evidence>
<evidence type="ECO:0000305" key="5"/>
<evidence type="ECO:0000312" key="6">
    <source>
        <dbReference type="EMBL" id="EDW59362.1"/>
    </source>
</evidence>
<protein>
    <recommendedName>
        <fullName evidence="2">3'-5' exonuclease</fullName>
        <ecNumber>3.1.11.-</ecNumber>
    </recommendedName>
    <alternativeName>
        <fullName>Werner Syndrome-like exonuclease</fullName>
    </alternativeName>
</protein>
<keyword id="KW-0269">Exonuclease</keyword>
<keyword id="KW-0378">Hydrolase</keyword>
<keyword id="KW-0460">Magnesium</keyword>
<keyword id="KW-0479">Metal-binding</keyword>
<keyword id="KW-0540">Nuclease</keyword>
<keyword id="KW-0539">Nucleus</keyword>
<keyword id="KW-0597">Phosphoprotein</keyword>
<keyword id="KW-1185">Reference proteome</keyword>
<reference evidence="6" key="1">
    <citation type="journal article" date="2007" name="Nature">
        <title>Evolution of genes and genomes on the Drosophila phylogeny.</title>
        <authorList>
            <consortium name="Drosophila 12 genomes consortium"/>
        </authorList>
    </citation>
    <scope>NUCLEOTIDE SEQUENCE [LARGE SCALE GENOMIC DNA]</scope>
    <source>
        <strain evidence="6">Tucson 15010-1051.87</strain>
    </source>
</reference>
<comment type="function">
    <text evidence="2">Has exonuclease activity on both single-stranded and duplex templates bearing overhangs, but not blunt ended duplex DNA, and cleaves in a 3'-5' direction. Essential for the formation of DNA replication focal centers. Has an important role in maintaining genome stability.</text>
</comment>
<comment type="subcellular location">
    <subcellularLocation>
        <location evidence="2">Nucleus</location>
    </subcellularLocation>
</comment>
<comment type="similarity">
    <text evidence="5">Belongs to the WRNexo family.</text>
</comment>
<comment type="sequence caution" evidence="5">
    <conflict type="erroneous initiation">
        <sequence resource="EMBL-CDS" id="EDW59362"/>
    </conflict>
    <text>Truncated N-terminus.</text>
</comment>
<feature type="chain" id="PRO_0000399382" description="3'-5' exonuclease">
    <location>
        <begin position="1"/>
        <end position="330"/>
    </location>
</feature>
<feature type="domain" description="3'-5' exonuclease" evidence="3">
    <location>
        <begin position="117"/>
        <end position="289"/>
    </location>
</feature>
<feature type="region of interest" description="Disordered" evidence="4">
    <location>
        <begin position="1"/>
        <end position="92"/>
    </location>
</feature>
<feature type="compositionally biased region" description="Basic and acidic residues" evidence="4">
    <location>
        <begin position="27"/>
        <end position="39"/>
    </location>
</feature>
<feature type="compositionally biased region" description="Basic and acidic residues" evidence="4">
    <location>
        <begin position="48"/>
        <end position="66"/>
    </location>
</feature>
<feature type="binding site" evidence="2">
    <location>
        <position position="139"/>
    </location>
    <ligand>
        <name>Mg(2+)</name>
        <dbReference type="ChEBI" id="CHEBI:18420"/>
        <label>1</label>
        <note>catalytic</note>
    </ligand>
</feature>
<feature type="binding site" evidence="2">
    <location>
        <position position="139"/>
    </location>
    <ligand>
        <name>Mg(2+)</name>
        <dbReference type="ChEBI" id="CHEBI:18420"/>
        <label>2</label>
        <note>catalytic</note>
    </ligand>
</feature>
<feature type="binding site" evidence="2">
    <location>
        <position position="141"/>
    </location>
    <ligand>
        <name>Mg(2+)</name>
        <dbReference type="ChEBI" id="CHEBI:18420"/>
        <label>1</label>
        <note>catalytic</note>
    </ligand>
</feature>
<feature type="binding site" evidence="1">
    <location>
        <position position="277"/>
    </location>
    <ligand>
        <name>Mg(2+)</name>
        <dbReference type="ChEBI" id="CHEBI:18420"/>
        <label>1</label>
        <note>catalytic</note>
    </ligand>
</feature>
<feature type="modified residue" description="Phosphoserine" evidence="2">
    <location>
        <position position="79"/>
    </location>
</feature>
<feature type="modified residue" description="Phosphoserine" evidence="2">
    <location>
        <position position="87"/>
    </location>
</feature>
<name>WRNXO_DROVI</name>
<dbReference type="EC" id="3.1.11.-"/>
<dbReference type="EMBL" id="CH940652">
    <property type="protein sequence ID" value="EDW59362.1"/>
    <property type="status" value="ALT_INIT"/>
    <property type="molecule type" value="Genomic_DNA"/>
</dbReference>
<dbReference type="RefSeq" id="XP_002056250.2">
    <property type="nucleotide sequence ID" value="XM_002056214.4"/>
</dbReference>
<dbReference type="SMR" id="B4M401"/>
<dbReference type="FunCoup" id="B4M401">
    <property type="interactions" value="359"/>
</dbReference>
<dbReference type="STRING" id="7244.B4M401"/>
<dbReference type="EnsemblMetazoa" id="FBtr0226762">
    <property type="protein sequence ID" value="FBpp0225254"/>
    <property type="gene ID" value="FBgn0198106"/>
</dbReference>
<dbReference type="EnsemblMetazoa" id="XM_002056214.3">
    <property type="protein sequence ID" value="XP_002056250.2"/>
    <property type="gene ID" value="LOC6632852"/>
</dbReference>
<dbReference type="GeneID" id="6632852"/>
<dbReference type="KEGG" id="dvi:6632852"/>
<dbReference type="CTD" id="42208"/>
<dbReference type="eggNOG" id="KOG4373">
    <property type="taxonomic scope" value="Eukaryota"/>
</dbReference>
<dbReference type="InParanoid" id="B4M401"/>
<dbReference type="OrthoDB" id="10261556at2759"/>
<dbReference type="ChiTaRS" id="WRNexo">
    <property type="organism name" value="fly"/>
</dbReference>
<dbReference type="Proteomes" id="UP000008792">
    <property type="component" value="Unassembled WGS sequence"/>
</dbReference>
<dbReference type="GO" id="GO:0005634">
    <property type="term" value="C:nucleus"/>
    <property type="evidence" value="ECO:0000250"/>
    <property type="project" value="UniProtKB"/>
</dbReference>
<dbReference type="GO" id="GO:0008408">
    <property type="term" value="F:3'-5' exonuclease activity"/>
    <property type="evidence" value="ECO:0000250"/>
    <property type="project" value="UniProtKB"/>
</dbReference>
<dbReference type="GO" id="GO:0046872">
    <property type="term" value="F:metal ion binding"/>
    <property type="evidence" value="ECO:0007669"/>
    <property type="project" value="UniProtKB-KW"/>
</dbReference>
<dbReference type="GO" id="GO:0003676">
    <property type="term" value="F:nucleic acid binding"/>
    <property type="evidence" value="ECO:0007669"/>
    <property type="project" value="InterPro"/>
</dbReference>
<dbReference type="GO" id="GO:0045950">
    <property type="term" value="P:negative regulation of mitotic recombination"/>
    <property type="evidence" value="ECO:0000250"/>
    <property type="project" value="UniProtKB"/>
</dbReference>
<dbReference type="GO" id="GO:0006139">
    <property type="term" value="P:nucleobase-containing compound metabolic process"/>
    <property type="evidence" value="ECO:0007669"/>
    <property type="project" value="InterPro"/>
</dbReference>
<dbReference type="CDD" id="cd06141">
    <property type="entry name" value="WRN_exo"/>
    <property type="match status" value="1"/>
</dbReference>
<dbReference type="FunFam" id="3.30.420.10:FF:000104">
    <property type="entry name" value="Werner Syndrome-like exonuclease"/>
    <property type="match status" value="1"/>
</dbReference>
<dbReference type="Gene3D" id="3.30.420.10">
    <property type="entry name" value="Ribonuclease H-like superfamily/Ribonuclease H"/>
    <property type="match status" value="1"/>
</dbReference>
<dbReference type="InterPro" id="IPR002562">
    <property type="entry name" value="3'-5'_exonuclease_dom"/>
</dbReference>
<dbReference type="InterPro" id="IPR051132">
    <property type="entry name" value="3-5_Exonuclease_domain"/>
</dbReference>
<dbReference type="InterPro" id="IPR012337">
    <property type="entry name" value="RNaseH-like_sf"/>
</dbReference>
<dbReference type="InterPro" id="IPR036397">
    <property type="entry name" value="RNaseH_sf"/>
</dbReference>
<dbReference type="PANTHER" id="PTHR13620:SF109">
    <property type="entry name" value="3'-5' EXONUCLEASE"/>
    <property type="match status" value="1"/>
</dbReference>
<dbReference type="PANTHER" id="PTHR13620">
    <property type="entry name" value="3-5 EXONUCLEASE"/>
    <property type="match status" value="1"/>
</dbReference>
<dbReference type="Pfam" id="PF01612">
    <property type="entry name" value="DNA_pol_A_exo1"/>
    <property type="match status" value="1"/>
</dbReference>
<dbReference type="SMART" id="SM00474">
    <property type="entry name" value="35EXOc"/>
    <property type="match status" value="1"/>
</dbReference>
<dbReference type="SUPFAM" id="SSF53098">
    <property type="entry name" value="Ribonuclease H-like"/>
    <property type="match status" value="1"/>
</dbReference>
<proteinExistence type="inferred from homology"/>